<evidence type="ECO:0000250" key="1">
    <source>
        <dbReference type="UniProtKB" id="P03211"/>
    </source>
</evidence>
<evidence type="ECO:0000256" key="2">
    <source>
        <dbReference type="SAM" id="MobiDB-lite"/>
    </source>
</evidence>
<evidence type="ECO:0000305" key="3"/>
<evidence type="ECO:0007829" key="4">
    <source>
        <dbReference type="PDB" id="4PR5"/>
    </source>
</evidence>
<comment type="function">
    <text evidence="1">Responsible for the origin of replication (oriP) dependent replication and maintenance of viral episomes during latent infection. EBNA1 dimer interacts with the DS (dyad symmetry) element within the origin of replication oriP and with a host mitotic chromosome to initiate viral DNA replication during latency. EBNA1 binding to DS recruits the host origin recognition complex (ORC). Governs the faithful mitotic segregation of the viral episomes by binding both the FR (family of repeats) element within oriP and the host mitotic chromosomes. Forms a cell cycle-dependent tyrosine-dependent DNA cross-link and single-strand cleavage at oriP required for terminating replication and maintaining viral episomes. Counteracts the stabilization of host p53/TP53 by host USP7, thereby decreasing apoptosis and increasing host cell survival. Induces degradation of host PML through the ubiquitin-proteasome system, which promotes lytic reactivation and may impair the host cell DNA repair. Increases the association of CK2 with PML proteins which increases the phosphorylation of PML proteins by CK2, triggering the polyubiquitylation and degradation of PML. Displays inhibitory effects on a SUMO2-modified complex that includes STUB1, KAP1 and USP7. This inhibitory effect possibly participates to the maintenance of latency linked to PML silencing.</text>
</comment>
<comment type="subunit">
    <text evidence="1">Homodimer. Dimers can assemble into higher-order oligomers like a homohexamer. Binding to the DS element involves 2 dimers of EBNA1. Interacts with human USP7; this interaction is independent and simultaneous to EBNA1 interaction with CSNK2B as well as necessary for PML nuclear bodies disruption by EBNA1. Interacts with host CSNK2B (via KSSR motif); the interaction requires phosphorylation of EBNA1, is independent and simultaneous to EBNA1 interaction with USP7 as well as necessary for PML nuclear bodies disruption by EBNA1. EBNA1, USP7 and CSNK2B form a ternary complex. EBNA1, USP7 and CSNK2B form a ternary complex. Interacts with human EBP2; it is not clear if this interaction is linked with the ability of EBNA1 to associate with host mitotic chromosomes. Interacts with BGLF4; this interaction facilitates the switch from latent to lytic DNA replication by down-regulating EBNA1 replication function. Interacts with human PAX5; this interaction promotes EBNA1-dependent transcription. Interacts with host KPNA1/Importin subunit alpha-5; this interaction allows the nuclear import of EBNA1. Interacts with host KPNA2/Importin subunit alpha-1; this interaction allows the nuclear import of EBNA1. Interacts with host C1QBP/P32. Interacts with host BIRC5/Survivin; this interaction is probably important for EBV episome maintenance in Burkitt's lymphoma host cells.</text>
</comment>
<comment type="interaction">
    <interactant intactId="EBI-2621046">
        <id>Q3KSS4</id>
    </interactant>
    <interactant intactId="EBI-2621046">
        <id>Q3KSS4</id>
        <label>EBNA1</label>
    </interactant>
    <organismsDiffer>false</organismsDiffer>
    <experiments>2</experiments>
</comment>
<comment type="subcellular location">
    <subcellularLocation>
        <location evidence="1">Host nucleus</location>
    </subcellularLocation>
</comment>
<comment type="domain">
    <text evidence="1">The N-terminus contains the region UR1 that binds zinc and is essential for EBNA1 to activate transcription. This domain dimerizes upon coordinating. The Gly-Gly-Ala repeat region (GAr) inhibits the mRNA translation of EBNA1 in cis and thus prevents MHC-I restricted presentation of EBNA1 epitopes to the host cytotoxic T cells. The chromosome-tethering regions contain Gly-Arg (GR) repeats that function as AT hooks and are involved in EBNA1 stable replication and partition of episomes. The C-terminus DNA binding and dimerization domain (DBD/DD) is required for the viral latent DNA replication.</text>
</comment>
<comment type="PTM">
    <text evidence="1">Phosphorylation at Ser-385 increases the nuclear import efficiency of EBNA1.</text>
</comment>
<comment type="PTM">
    <text evidence="1">Phosphorylation at Ser-393 is required for interaction with CSNK2B.</text>
</comment>
<comment type="miscellaneous">
    <text evidence="1">EBNA1 is possibly linked to multiple sclerosis in the host. Antibodies that recognize both EBNA1 and the host protein HEPACAM/GlialCAM can be produced when B cells undergo somatic hypermutations. A mimicry has also been proposed between ANO2 (Anoctamin 2) and EBNA1.</text>
</comment>
<comment type="similarity">
    <text evidence="3">Belongs to the herpesviridae EBNA1 family.</text>
</comment>
<accession>Q3KSS4</accession>
<organism>
    <name type="scientific">Epstein-Barr virus (strain GD1)</name>
    <name type="common">HHV-4</name>
    <name type="synonym">Human gammaherpesvirus 4</name>
    <dbReference type="NCBI Taxonomy" id="10376"/>
    <lineage>
        <taxon>Viruses</taxon>
        <taxon>Duplodnaviria</taxon>
        <taxon>Heunggongvirae</taxon>
        <taxon>Peploviricota</taxon>
        <taxon>Herviviricetes</taxon>
        <taxon>Herpesvirales</taxon>
        <taxon>Orthoherpesviridae</taxon>
        <taxon>Gammaherpesvirinae</taxon>
        <taxon>Lymphocryptovirus</taxon>
        <taxon>Lymphocryptovirus humangamma4</taxon>
    </lineage>
</organism>
<protein>
    <recommendedName>
        <fullName>Epstein-Barr nuclear antigen 1</fullName>
        <shortName>EBNA-1</shortName>
        <shortName>EBV nuclear antigen 1</shortName>
        <ecNumber evidence="1">3.1.21.-</ecNumber>
    </recommendedName>
</protein>
<keyword id="KW-0002">3D-structure</keyword>
<keyword id="KW-0010">Activator</keyword>
<keyword id="KW-0190">Covalent protein-DNA linkage</keyword>
<keyword id="KW-0238">DNA-binding</keyword>
<keyword id="KW-0255">Endonuclease</keyword>
<keyword id="KW-1048">Host nucleus</keyword>
<keyword id="KW-0945">Host-virus interaction</keyword>
<keyword id="KW-0378">Hydrolase</keyword>
<keyword id="KW-1100">Inhibition of host NF-kappa-B by virus</keyword>
<keyword id="KW-0540">Nuclease</keyword>
<keyword id="KW-0597">Phosphoprotein</keyword>
<keyword id="KW-0804">Transcription</keyword>
<keyword id="KW-0805">Transcription regulation</keyword>
<keyword id="KW-1251">Viral latency</keyword>
<keyword id="KW-1276">Viral latency initiation and maintenance</keyword>
<proteinExistence type="evidence at protein level"/>
<reference key="1">
    <citation type="journal article" date="2005" name="J. Virol.">
        <title>Genomic sequence analysis of Epstein-Barr virus strain GD1 from a nasopharyngeal carcinoma patient.</title>
        <authorList>
            <person name="Zeng M.-S."/>
            <person name="Li D.-J."/>
            <person name="Liu Q.-L."/>
            <person name="Song L.-B."/>
            <person name="Li M.-Z."/>
            <person name="Zhang R.-H."/>
            <person name="Yu X.-J."/>
            <person name="Wang H.-M."/>
            <person name="Ernberg I."/>
            <person name="Zeng Y.-X."/>
        </authorList>
    </citation>
    <scope>NUCLEOTIDE SEQUENCE [LARGE SCALE GENOMIC DNA]</scope>
</reference>
<dbReference type="EC" id="3.1.21.-" evidence="1"/>
<dbReference type="EMBL" id="AY961628">
    <property type="protein sequence ID" value="AAY41125.1"/>
    <property type="molecule type" value="Genomic_DNA"/>
</dbReference>
<dbReference type="PDB" id="4PR5">
    <property type="method" value="X-ray"/>
    <property type="resolution" value="1.80 A"/>
    <property type="chains" value="C=407-417"/>
</dbReference>
<dbReference type="PDB" id="4PRD">
    <property type="method" value="X-ray"/>
    <property type="resolution" value="1.75 A"/>
    <property type="chains" value="C=407-417"/>
</dbReference>
<dbReference type="PDB" id="4PRH">
    <property type="method" value="X-ray"/>
    <property type="resolution" value="2.50 A"/>
    <property type="chains" value="C=407-417"/>
</dbReference>
<dbReference type="PDBsum" id="4PR5"/>
<dbReference type="PDBsum" id="4PRD"/>
<dbReference type="PDBsum" id="4PRH"/>
<dbReference type="SMR" id="Q3KSS4"/>
<dbReference type="IntAct" id="Q3KSS4">
    <property type="interactions" value="7"/>
</dbReference>
<dbReference type="EvolutionaryTrace" id="Q3KSS4"/>
<dbReference type="Proteomes" id="UP000007641">
    <property type="component" value="Genome"/>
</dbReference>
<dbReference type="GO" id="GO:0042025">
    <property type="term" value="C:host cell nucleus"/>
    <property type="evidence" value="ECO:0007669"/>
    <property type="project" value="UniProtKB-SubCell"/>
</dbReference>
<dbReference type="GO" id="GO:0003677">
    <property type="term" value="F:DNA binding"/>
    <property type="evidence" value="ECO:0007669"/>
    <property type="project" value="UniProtKB-KW"/>
</dbReference>
<dbReference type="GO" id="GO:0003700">
    <property type="term" value="F:DNA-binding transcription factor activity"/>
    <property type="evidence" value="ECO:0007669"/>
    <property type="project" value="InterPro"/>
</dbReference>
<dbReference type="GO" id="GO:0004519">
    <property type="term" value="F:endonuclease activity"/>
    <property type="evidence" value="ECO:0007669"/>
    <property type="project" value="UniProtKB-KW"/>
</dbReference>
<dbReference type="GO" id="GO:0042802">
    <property type="term" value="F:identical protein binding"/>
    <property type="evidence" value="ECO:0000353"/>
    <property type="project" value="IntAct"/>
</dbReference>
<dbReference type="GO" id="GO:0045893">
    <property type="term" value="P:positive regulation of DNA-templated transcription"/>
    <property type="evidence" value="ECO:0007669"/>
    <property type="project" value="InterPro"/>
</dbReference>
<dbReference type="GO" id="GO:0006275">
    <property type="term" value="P:regulation of DNA replication"/>
    <property type="evidence" value="ECO:0007669"/>
    <property type="project" value="InterPro"/>
</dbReference>
<dbReference type="GO" id="GO:0085034">
    <property type="term" value="P:symbiont-mediated suppression of host NF-kappaB cascade"/>
    <property type="evidence" value="ECO:0007669"/>
    <property type="project" value="UniProtKB-KW"/>
</dbReference>
<dbReference type="GO" id="GO:0019042">
    <property type="term" value="P:viral latency"/>
    <property type="evidence" value="ECO:0007669"/>
    <property type="project" value="UniProtKB-KW"/>
</dbReference>
<dbReference type="FunFam" id="3.30.70.390:FF:000001">
    <property type="entry name" value="EBNA1"/>
    <property type="match status" value="1"/>
</dbReference>
<dbReference type="Gene3D" id="3.30.70.390">
    <property type="entry name" value="Epstein Barr virus nuclear antigen-1, DNA-binding domain"/>
    <property type="match status" value="1"/>
</dbReference>
<dbReference type="InterPro" id="IPR035975">
    <property type="entry name" value="E2/EBNA1_C_sf"/>
</dbReference>
<dbReference type="InterPro" id="IPR004186">
    <property type="entry name" value="EBNA1_DNA-bd"/>
</dbReference>
<dbReference type="InterPro" id="IPR037007">
    <property type="entry name" value="EBNA1_DNA-bd_sf"/>
</dbReference>
<dbReference type="Pfam" id="PF02905">
    <property type="entry name" value="EBV-NA1"/>
    <property type="match status" value="1"/>
</dbReference>
<dbReference type="PRINTS" id="PR01228">
    <property type="entry name" value="EGGSHELL"/>
</dbReference>
<dbReference type="SUPFAM" id="SSF54957">
    <property type="entry name" value="Viral DNA-binding domain"/>
    <property type="match status" value="1"/>
</dbReference>
<name>EBNA1_EBVG</name>
<organismHost>
    <name type="scientific">Homo sapiens</name>
    <name type="common">Human</name>
    <dbReference type="NCBI Taxonomy" id="9606"/>
</organismHost>
<feature type="chain" id="PRO_0000375932" description="Epstein-Barr nuclear antigen 1">
    <location>
        <begin position="1"/>
        <end position="641"/>
    </location>
</feature>
<feature type="region of interest" description="Disordered" evidence="2">
    <location>
        <begin position="1"/>
        <end position="124"/>
    </location>
</feature>
<feature type="region of interest" description="Disordered" evidence="2">
    <location>
        <begin position="168"/>
        <end position="478"/>
    </location>
</feature>
<feature type="region of interest" description="Interaction with host C1QBP/P32" evidence="1">
    <location>
        <begin position="325"/>
        <end position="376"/>
    </location>
</feature>
<feature type="region of interest" description="Chromosome-tethering GR2" evidence="1">
    <location>
        <begin position="328"/>
        <end position="378"/>
    </location>
</feature>
<feature type="region of interest" description="Nuclear localization signal" evidence="1">
    <location>
        <begin position="379"/>
        <end position="386"/>
    </location>
</feature>
<feature type="region of interest" description="Interaction with host CSNK2B" evidence="1">
    <location>
        <begin position="387"/>
        <end position="395"/>
    </location>
</feature>
<feature type="region of interest" description="Interaction with host USP7" evidence="1">
    <location>
        <begin position="436"/>
        <end position="450"/>
    </location>
</feature>
<feature type="region of interest" description="DBD/DD" evidence="1">
    <location>
        <begin position="452"/>
        <end position="607"/>
    </location>
</feature>
<feature type="region of interest" description="Disordered" evidence="2">
    <location>
        <begin position="612"/>
        <end position="641"/>
    </location>
</feature>
<feature type="compositionally biased region" description="Gly residues" evidence="2">
    <location>
        <begin position="1"/>
        <end position="14"/>
    </location>
</feature>
<feature type="compositionally biased region" description="Basic residues" evidence="2">
    <location>
        <begin position="41"/>
        <end position="50"/>
    </location>
</feature>
<feature type="compositionally biased region" description="Gly residues" evidence="2">
    <location>
        <begin position="51"/>
        <end position="62"/>
    </location>
</feature>
<feature type="compositionally biased region" description="Gly residues" evidence="2">
    <location>
        <begin position="84"/>
        <end position="124"/>
    </location>
</feature>
<feature type="compositionally biased region" description="Gly residues" evidence="2">
    <location>
        <begin position="168"/>
        <end position="352"/>
    </location>
</feature>
<feature type="compositionally biased region" description="Basic and acidic residues" evidence="2">
    <location>
        <begin position="358"/>
        <end position="381"/>
    </location>
</feature>
<feature type="compositionally biased region" description="Low complexity" evidence="2">
    <location>
        <begin position="383"/>
        <end position="394"/>
    </location>
</feature>
<feature type="compositionally biased region" description="Basic residues" evidence="2">
    <location>
        <begin position="458"/>
        <end position="470"/>
    </location>
</feature>
<feature type="compositionally biased region" description="Acidic residues" evidence="2">
    <location>
        <begin position="620"/>
        <end position="641"/>
    </location>
</feature>
<feature type="active site" description="For site-specific DNA cleavage activity" evidence="1">
    <location>
        <position position="518"/>
    </location>
</feature>
<feature type="binding site" evidence="1">
    <location>
        <position position="460"/>
    </location>
    <ligand>
        <name>DNA</name>
        <dbReference type="ChEBI" id="CHEBI:16991"/>
    </ligand>
</feature>
<feature type="binding site" evidence="1">
    <location>
        <position position="461"/>
    </location>
    <ligand>
        <name>DNA</name>
        <dbReference type="ChEBI" id="CHEBI:16991"/>
    </ligand>
</feature>
<feature type="binding site" description="covalent" evidence="1">
    <location>
        <position position="518"/>
    </location>
    <ligand>
        <name>DNA</name>
        <dbReference type="ChEBI" id="CHEBI:16991"/>
    </ligand>
</feature>
<feature type="site" description="Interaction dimer-dimer" evidence="1">
    <location>
        <position position="491"/>
    </location>
</feature>
<feature type="site" description="Required for episome maintenance" evidence="1">
    <location>
        <position position="518"/>
    </location>
</feature>
<feature type="site" description="Interaction dimer-dimer" evidence="1">
    <location>
        <position position="581"/>
    </location>
</feature>
<feature type="modified residue" description="Phosphoserine" evidence="1">
    <location>
        <position position="385"/>
    </location>
</feature>
<feature type="modified residue" description="Phosphoserine" evidence="1">
    <location>
        <position position="393"/>
    </location>
</feature>
<feature type="turn" evidence="4">
    <location>
        <begin position="412"/>
        <end position="414"/>
    </location>
</feature>
<gene>
    <name type="primary">EBNA1</name>
    <name type="ORF">BKRF1</name>
</gene>
<sequence>MSDEGPGTGPGNGLGQKEDSSGPEGSGGSGPQRRGGDNHGRGRGRGRGRGGGRPGAPGGSGSGPRHRDGVRRPQKRPSCIGCKGAHGGTGSGAGAGGAGAGGAGAGGGAGAGGGAGGAGGAGGAGAGGGAGAGGGAGGAGGAGAGGGAGAGGGAGGAGAGGGAGGAGGAGAGGGAGAGGGAGGAGAGGGAGGAGGAGAGGGAGAGGAGGAGGAGAGGAGAGGGAGGAGGAGAGGAGAGGAGAGGAGAGGAGGAGAGGAGGAGAGGAGGAGAGEEAGGAGAGGGAGGAGAGGAGGAGAGGAGGAGAGGAGGAGAGGGAGAGGAGAGGGGRGRGGSGGRGRGGSGGRGRGGSGGRRGRGRERARGRSRERARGRGRGRGEKRPRSPSSQSSSSGSPPRRPPPGRRPFFHPVGDADYFEYLQEGGPDGEPDVPPGAIEQGPTDDPGEGPSTGPRGQGDGGRRKKGGWFGKHRGQGGSNPKFENIAEGLRVLLARSHVERTTEEGNWVAGVFVYGGSKTSLYNLRRGIALAVPQCRITPLSRLPFGMAPGPGPQPGPLRESIVCYFMVFLQTHIFAEVLKDAIKDLVMTKPAPTCNIKVTVCSFDDGVDLPPWFPPMVEGAAAEGDDGDDGDEGGDGDEGEEGQE</sequence>